<keyword id="KW-0256">Endoplasmic reticulum</keyword>
<keyword id="KW-0325">Glycoprotein</keyword>
<keyword id="KW-0378">Hydrolase</keyword>
<keyword id="KW-0472">Membrane</keyword>
<keyword id="KW-0645">Protease</keyword>
<keyword id="KW-1185">Reference proteome</keyword>
<keyword id="KW-0735">Signal-anchor</keyword>
<keyword id="KW-0812">Transmembrane</keyword>
<keyword id="KW-1133">Transmembrane helix</keyword>
<gene>
    <name type="primary">SEC11</name>
    <name type="ORF">ARB_05208</name>
</gene>
<protein>
    <recommendedName>
        <fullName>Signal peptidase complex catalytic subunit SEC11</fullName>
        <ecNumber evidence="1">3.4.21.89</ecNumber>
    </recommendedName>
    <alternativeName>
        <fullName>Signal peptidase I</fullName>
    </alternativeName>
</protein>
<evidence type="ECO:0000250" key="1">
    <source>
        <dbReference type="UniProtKB" id="P15367"/>
    </source>
</evidence>
<evidence type="ECO:0000250" key="2">
    <source>
        <dbReference type="UniProtKB" id="P67812"/>
    </source>
</evidence>
<evidence type="ECO:0000255" key="3"/>
<evidence type="ECO:0000256" key="4">
    <source>
        <dbReference type="SAM" id="MobiDB-lite"/>
    </source>
</evidence>
<evidence type="ECO:0000305" key="5"/>
<accession>D4ALL0</accession>
<comment type="function">
    <text evidence="1 2">Catalytic component of the signal peptidase complex (SPC) which catalyzes the cleavage of N-terminal signal sequences from nascent proteins as they are translocated into the lumen of the endoplasmic reticulum (By similarity). Specifically cleaves N-terminal signal peptides that contain a hydrophobic alpha-helix (h-region) shorter than 18-20 amino acids (By similarity).</text>
</comment>
<comment type="catalytic activity">
    <reaction evidence="1">
        <text>Cleavage of hydrophobic, N-terminal signal or leader sequences from secreted and periplasmic proteins.</text>
        <dbReference type="EC" id="3.4.21.89"/>
    </reaction>
</comment>
<comment type="subunit">
    <text evidence="1 2">Component of the signal peptidase complex (SPC) composed of a catalytic subunit SEC11 and three accessory subunits SPC1, SPC2 and SPC3 (By similarity). The complex induces a local thinning of the ER membrane which is used to measure the length of the signal peptide (SP) h-region of protein substrates. This ensures the selectivity of the complex towards h-regions shorter than 18-20 amino acids (By similarity). SPC associates with the translocon complex (By similarity).</text>
</comment>
<comment type="subcellular location">
    <subcellularLocation>
        <location evidence="1">Endoplasmic reticulum membrane</location>
        <topology evidence="1">Single-pass type II membrane protein</topology>
    </subcellularLocation>
</comment>
<comment type="domain">
    <text evidence="2">The C-terminal short (CTS) helix is essential for catalytic activity. It may be accommodated as a transmembrane helix in the thinned membrane environment of the complex, similarly to the signal peptide in the complex substrates.</text>
</comment>
<comment type="similarity">
    <text evidence="5">Belongs to the peptidase S26B family.</text>
</comment>
<sequence>MFAELAPYLSNPRQTLAQLLNFALVLSTAFMGWKALSVYTNSSSPIVVVLSGSMEPAFQRGDLLFLWNNSPRAEVGEIVVYNVQGKDIPIVHRVIKAFGTGDGGKKSQRRLEREADKRSGPGLSSPVSHQMLTKGDNNIADDTELYAQGQDYLDRKLDIVGSVRGYIPAVGYVTIMLAENPWMKTVLLGIMGVMVMLQRE</sequence>
<name>SEC11_ARTBC</name>
<proteinExistence type="inferred from homology"/>
<feature type="chain" id="PRO_0000412312" description="Signal peptidase complex catalytic subunit SEC11">
    <location>
        <begin position="1"/>
        <end position="200"/>
    </location>
</feature>
<feature type="topological domain" description="Cytoplasmic" evidence="3">
    <location>
        <begin position="1"/>
        <end position="15"/>
    </location>
</feature>
<feature type="transmembrane region" description="Helical; Signal-anchor for type II membrane protein" evidence="3">
    <location>
        <begin position="16"/>
        <end position="33"/>
    </location>
</feature>
<feature type="topological domain" description="Lumenal" evidence="3">
    <location>
        <begin position="34"/>
        <end position="200"/>
    </location>
</feature>
<feature type="region of interest" description="Disordered" evidence="4">
    <location>
        <begin position="101"/>
        <end position="134"/>
    </location>
</feature>
<feature type="region of interest" description="C-terminal short (CTS) helix" evidence="2">
    <location>
        <begin position="186"/>
        <end position="197"/>
    </location>
</feature>
<feature type="compositionally biased region" description="Basic and acidic residues" evidence="4">
    <location>
        <begin position="103"/>
        <end position="119"/>
    </location>
</feature>
<feature type="active site" description="Charge relay system" evidence="1">
    <location>
        <position position="53"/>
    </location>
</feature>
<feature type="active site" description="Charge relay system" evidence="1">
    <location>
        <position position="92"/>
    </location>
</feature>
<feature type="active site" description="Charge relay system" evidence="1">
    <location>
        <position position="142"/>
    </location>
</feature>
<feature type="glycosylation site" description="N-linked (GlcNAc...) asparagine" evidence="3">
    <location>
        <position position="41"/>
    </location>
</feature>
<organism>
    <name type="scientific">Arthroderma benhamiae (strain ATCC MYA-4681 / CBS 112371)</name>
    <name type="common">Trichophyton mentagrophytes</name>
    <dbReference type="NCBI Taxonomy" id="663331"/>
    <lineage>
        <taxon>Eukaryota</taxon>
        <taxon>Fungi</taxon>
        <taxon>Dikarya</taxon>
        <taxon>Ascomycota</taxon>
        <taxon>Pezizomycotina</taxon>
        <taxon>Eurotiomycetes</taxon>
        <taxon>Eurotiomycetidae</taxon>
        <taxon>Onygenales</taxon>
        <taxon>Arthrodermataceae</taxon>
        <taxon>Trichophyton</taxon>
    </lineage>
</organism>
<reference key="1">
    <citation type="journal article" date="2011" name="Genome Biol.">
        <title>Comparative and functional genomics provide insights into the pathogenicity of dermatophytic fungi.</title>
        <authorList>
            <person name="Burmester A."/>
            <person name="Shelest E."/>
            <person name="Gloeckner G."/>
            <person name="Heddergott C."/>
            <person name="Schindler S."/>
            <person name="Staib P."/>
            <person name="Heidel A."/>
            <person name="Felder M."/>
            <person name="Petzold A."/>
            <person name="Szafranski K."/>
            <person name="Feuermann M."/>
            <person name="Pedruzzi I."/>
            <person name="Priebe S."/>
            <person name="Groth M."/>
            <person name="Winkler R."/>
            <person name="Li W."/>
            <person name="Kniemeyer O."/>
            <person name="Schroeckh V."/>
            <person name="Hertweck C."/>
            <person name="Hube B."/>
            <person name="White T.C."/>
            <person name="Platzer M."/>
            <person name="Guthke R."/>
            <person name="Heitman J."/>
            <person name="Woestemeyer J."/>
            <person name="Zipfel P.F."/>
            <person name="Monod M."/>
            <person name="Brakhage A.A."/>
        </authorList>
    </citation>
    <scope>NUCLEOTIDE SEQUENCE [LARGE SCALE GENOMIC DNA]</scope>
    <source>
        <strain>ATCC MYA-4681 / CBS 112371</strain>
    </source>
</reference>
<dbReference type="EC" id="3.4.21.89" evidence="1"/>
<dbReference type="EMBL" id="ABSU01000002">
    <property type="protein sequence ID" value="EFE36269.1"/>
    <property type="molecule type" value="Genomic_DNA"/>
</dbReference>
<dbReference type="RefSeq" id="XP_003016914.1">
    <property type="nucleotide sequence ID" value="XM_003016868.1"/>
</dbReference>
<dbReference type="SMR" id="D4ALL0"/>
<dbReference type="STRING" id="663331.D4ALL0"/>
<dbReference type="MEROPS" id="S26.010"/>
<dbReference type="GlyCosmos" id="D4ALL0">
    <property type="glycosylation" value="1 site, No reported glycans"/>
</dbReference>
<dbReference type="GeneID" id="9526554"/>
<dbReference type="KEGG" id="abe:ARB_05208"/>
<dbReference type="eggNOG" id="KOG3342">
    <property type="taxonomic scope" value="Eukaryota"/>
</dbReference>
<dbReference type="HOGENOM" id="CLU_089996_0_0_1"/>
<dbReference type="OMA" id="ILMNEYP"/>
<dbReference type="OrthoDB" id="10257561at2759"/>
<dbReference type="Proteomes" id="UP000008866">
    <property type="component" value="Unassembled WGS sequence"/>
</dbReference>
<dbReference type="GO" id="GO:0005787">
    <property type="term" value="C:signal peptidase complex"/>
    <property type="evidence" value="ECO:0007669"/>
    <property type="project" value="TreeGrafter"/>
</dbReference>
<dbReference type="GO" id="GO:0004252">
    <property type="term" value="F:serine-type endopeptidase activity"/>
    <property type="evidence" value="ECO:0007669"/>
    <property type="project" value="UniProtKB-EC"/>
</dbReference>
<dbReference type="GO" id="GO:0006465">
    <property type="term" value="P:signal peptide processing"/>
    <property type="evidence" value="ECO:0007669"/>
    <property type="project" value="InterPro"/>
</dbReference>
<dbReference type="CDD" id="cd06530">
    <property type="entry name" value="S26_SPase_I"/>
    <property type="match status" value="1"/>
</dbReference>
<dbReference type="InterPro" id="IPR036286">
    <property type="entry name" value="LexA/Signal_pep-like_sf"/>
</dbReference>
<dbReference type="InterPro" id="IPR019756">
    <property type="entry name" value="Pept_S26A_signal_pept_1_Ser-AS"/>
</dbReference>
<dbReference type="InterPro" id="IPR019533">
    <property type="entry name" value="Peptidase_S26"/>
</dbReference>
<dbReference type="InterPro" id="IPR001733">
    <property type="entry name" value="Peptidase_S26B"/>
</dbReference>
<dbReference type="NCBIfam" id="TIGR02228">
    <property type="entry name" value="sigpep_I_arch"/>
    <property type="match status" value="1"/>
</dbReference>
<dbReference type="PANTHER" id="PTHR10806">
    <property type="entry name" value="SIGNAL PEPTIDASE COMPLEX CATALYTIC SUBUNIT SEC11"/>
    <property type="match status" value="1"/>
</dbReference>
<dbReference type="PANTHER" id="PTHR10806:SF6">
    <property type="entry name" value="SIGNAL PEPTIDASE COMPLEX CATALYTIC SUBUNIT SEC11"/>
    <property type="match status" value="1"/>
</dbReference>
<dbReference type="SUPFAM" id="SSF51306">
    <property type="entry name" value="LexA/Signal peptidase"/>
    <property type="match status" value="1"/>
</dbReference>
<dbReference type="PROSITE" id="PS00501">
    <property type="entry name" value="SPASE_I_1"/>
    <property type="match status" value="1"/>
</dbReference>